<comment type="function">
    <text evidence="2">Photosystem II (PSII) is a light-driven water:plastoquinone oxidoreductase that uses light energy to abstract electrons from H(2)O, generating O(2) and a proton gradient subsequently used for ATP formation. It consists of a core antenna complex that captures photons, and an electron transfer chain that converts photonic excitation into a charge separation. The D1/D2 (PsbA/PsbD) reaction center heterodimer binds P680, the primary electron donor of PSII as well as several subsequent electron acceptors. D2 is needed for assembly of a stable PSII complex.</text>
</comment>
<comment type="catalytic activity">
    <reaction evidence="2">
        <text>2 a plastoquinone + 4 hnu + 2 H2O = 2 a plastoquinol + O2</text>
        <dbReference type="Rhea" id="RHEA:36359"/>
        <dbReference type="Rhea" id="RHEA-COMP:9561"/>
        <dbReference type="Rhea" id="RHEA-COMP:9562"/>
        <dbReference type="ChEBI" id="CHEBI:15377"/>
        <dbReference type="ChEBI" id="CHEBI:15379"/>
        <dbReference type="ChEBI" id="CHEBI:17757"/>
        <dbReference type="ChEBI" id="CHEBI:30212"/>
        <dbReference type="ChEBI" id="CHEBI:62192"/>
        <dbReference type="EC" id="1.10.3.9"/>
    </reaction>
</comment>
<comment type="cofactor">
    <text evidence="2">The D1/D2 heterodimer binds P680, chlorophylls that are the primary electron donor of PSII, and subsequent electron acceptors. It shares a non-heme iron and each subunit binds pheophytin, quinone, additional chlorophylls, carotenoids and lipids. There is also a Cl(-1) ion associated with D1 and D2, which is required for oxygen evolution. The PSII complex binds additional chlorophylls, carotenoids and specific lipids.</text>
</comment>
<comment type="subunit">
    <text evidence="2">PSII is composed of 1 copy each of membrane proteins PsbA, PsbB, PsbC, PsbD, PsbE, PsbF, PsbH, PsbI, PsbJ, PsbK, PsbL, PsbM, PsbT, PsbX, PsbY, PsbZ, Psb30/Ycf12, at least 3 peripheral proteins of the oxygen-evolving complex and a large number of cofactors. It forms dimeric complexes.</text>
</comment>
<comment type="subcellular location">
    <subcellularLocation>
        <location evidence="2">Plastid</location>
        <location evidence="2">Chloroplast thylakoid membrane</location>
        <topology evidence="2">Multi-pass membrane protein</topology>
    </subcellularLocation>
</comment>
<comment type="miscellaneous">
    <text evidence="2">2 of the reaction center chlorophylls (ChlD1 and ChlD2) are entirely coordinated by water.</text>
</comment>
<comment type="similarity">
    <text evidence="2">Belongs to the reaction center PufL/M/PsbA/D family.</text>
</comment>
<geneLocation type="chloroplast"/>
<organism>
    <name type="scientific">Phaseolus vulgaris</name>
    <name type="common">Kidney bean</name>
    <name type="synonym">French bean</name>
    <dbReference type="NCBI Taxonomy" id="3885"/>
    <lineage>
        <taxon>Eukaryota</taxon>
        <taxon>Viridiplantae</taxon>
        <taxon>Streptophyta</taxon>
        <taxon>Embryophyta</taxon>
        <taxon>Tracheophyta</taxon>
        <taxon>Spermatophyta</taxon>
        <taxon>Magnoliopsida</taxon>
        <taxon>eudicotyledons</taxon>
        <taxon>Gunneridae</taxon>
        <taxon>Pentapetalae</taxon>
        <taxon>rosids</taxon>
        <taxon>fabids</taxon>
        <taxon>Fabales</taxon>
        <taxon>Fabaceae</taxon>
        <taxon>Papilionoideae</taxon>
        <taxon>50 kb inversion clade</taxon>
        <taxon>NPAAA clade</taxon>
        <taxon>indigoferoid/millettioid clade</taxon>
        <taxon>Phaseoleae</taxon>
        <taxon>Phaseolus</taxon>
    </lineage>
</organism>
<protein>
    <recommendedName>
        <fullName evidence="2">Photosystem II D2 protein</fullName>
        <shortName evidence="2">PSII D2 protein</shortName>
        <ecNumber evidence="2">1.10.3.9</ecNumber>
    </recommendedName>
    <alternativeName>
        <fullName evidence="2">Photosystem Q(A) protein</fullName>
    </alternativeName>
</protein>
<name>PSBD_PHAVU</name>
<sequence>MTIALGKFTKDEKDLFDIMDDWLRRDRFVFVGWSGLLLFPCAYFALGGWFTGTTFVTSWYTHGLASSYLEGCNFLTAAVSTPANSLSHSLLLLWGPEAQGDFTRWCQLGGLWTFVALHGAFGLIGFMLRQFELARSVQLRPYNAIAFSGPIAVFVSVFLIYPLGQSGWFFAPSFGVAAIFRFILFFQGFHNWTLNPFHMMGVAGVLGAALLCAIHGATVENTLFEDGDGANTFRAFNPTQAEETYSMVTANRFWSQIFGVAFSNKRWLHFFMLFVPVTGLWMSALGVVGLALNLRAYDFVSQEIRAAEDPEFETFYTKNILLNEGIRAWMAAQDQPHENLIFPEEVLPRGNAL</sequence>
<dbReference type="EC" id="1.10.3.9" evidence="2"/>
<dbReference type="EMBL" id="DQ886273">
    <property type="protein sequence ID" value="ABH88083.1"/>
    <property type="molecule type" value="Genomic_DNA"/>
</dbReference>
<dbReference type="EMBL" id="EU196765">
    <property type="protein sequence ID" value="ABW22785.1"/>
    <property type="molecule type" value="Genomic_DNA"/>
</dbReference>
<dbReference type="RefSeq" id="YP_001122803.1">
    <property type="nucleotide sequence ID" value="NC_009259.1"/>
</dbReference>
<dbReference type="SMR" id="A4GGA2"/>
<dbReference type="GeneID" id="4961781"/>
<dbReference type="KEGG" id="pvu:4961781"/>
<dbReference type="PhylomeDB" id="A4GGA2"/>
<dbReference type="GO" id="GO:0009535">
    <property type="term" value="C:chloroplast thylakoid membrane"/>
    <property type="evidence" value="ECO:0007669"/>
    <property type="project" value="UniProtKB-SubCell"/>
</dbReference>
<dbReference type="GO" id="GO:0009523">
    <property type="term" value="C:photosystem II"/>
    <property type="evidence" value="ECO:0007669"/>
    <property type="project" value="UniProtKB-KW"/>
</dbReference>
<dbReference type="GO" id="GO:0016168">
    <property type="term" value="F:chlorophyll binding"/>
    <property type="evidence" value="ECO:0007669"/>
    <property type="project" value="UniProtKB-UniRule"/>
</dbReference>
<dbReference type="GO" id="GO:0045156">
    <property type="term" value="F:electron transporter, transferring electrons within the cyclic electron transport pathway of photosynthesis activity"/>
    <property type="evidence" value="ECO:0007669"/>
    <property type="project" value="InterPro"/>
</dbReference>
<dbReference type="GO" id="GO:0005506">
    <property type="term" value="F:iron ion binding"/>
    <property type="evidence" value="ECO:0007669"/>
    <property type="project" value="UniProtKB-UniRule"/>
</dbReference>
<dbReference type="GO" id="GO:0010242">
    <property type="term" value="F:oxygen evolving activity"/>
    <property type="evidence" value="ECO:0007669"/>
    <property type="project" value="UniProtKB-EC"/>
</dbReference>
<dbReference type="GO" id="GO:0009772">
    <property type="term" value="P:photosynthetic electron transport in photosystem II"/>
    <property type="evidence" value="ECO:0007669"/>
    <property type="project" value="InterPro"/>
</dbReference>
<dbReference type="CDD" id="cd09288">
    <property type="entry name" value="Photosystem-II_D2"/>
    <property type="match status" value="1"/>
</dbReference>
<dbReference type="FunFam" id="1.20.85.10:FF:000001">
    <property type="entry name" value="photosystem II D2 protein-like"/>
    <property type="match status" value="1"/>
</dbReference>
<dbReference type="Gene3D" id="1.20.85.10">
    <property type="entry name" value="Photosystem II protein D1-like"/>
    <property type="match status" value="1"/>
</dbReference>
<dbReference type="HAMAP" id="MF_01383">
    <property type="entry name" value="PSII_PsbD_D2"/>
    <property type="match status" value="1"/>
</dbReference>
<dbReference type="InterPro" id="IPR055266">
    <property type="entry name" value="D1/D2"/>
</dbReference>
<dbReference type="InterPro" id="IPR036854">
    <property type="entry name" value="Photo_II_D1/D2_sf"/>
</dbReference>
<dbReference type="InterPro" id="IPR000484">
    <property type="entry name" value="Photo_RC_L/M"/>
</dbReference>
<dbReference type="InterPro" id="IPR055265">
    <property type="entry name" value="Photo_RC_L/M_CS"/>
</dbReference>
<dbReference type="InterPro" id="IPR005868">
    <property type="entry name" value="PSII_PsbD/D2"/>
</dbReference>
<dbReference type="NCBIfam" id="TIGR01152">
    <property type="entry name" value="psbD"/>
    <property type="match status" value="1"/>
</dbReference>
<dbReference type="PANTHER" id="PTHR33149:SF57">
    <property type="entry name" value="PHOTOSYSTEM II D2 PROTEIN"/>
    <property type="match status" value="1"/>
</dbReference>
<dbReference type="PANTHER" id="PTHR33149">
    <property type="entry name" value="PHOTOSYSTEM II PROTEIN D1"/>
    <property type="match status" value="1"/>
</dbReference>
<dbReference type="Pfam" id="PF00124">
    <property type="entry name" value="Photo_RC"/>
    <property type="match status" value="1"/>
</dbReference>
<dbReference type="PRINTS" id="PR00256">
    <property type="entry name" value="REACTNCENTRE"/>
</dbReference>
<dbReference type="SUPFAM" id="SSF81483">
    <property type="entry name" value="Bacterial photosystem II reaction centre, L and M subunits"/>
    <property type="match status" value="1"/>
</dbReference>
<dbReference type="PROSITE" id="PS00244">
    <property type="entry name" value="REACTION_CENTER"/>
    <property type="match status" value="1"/>
</dbReference>
<accession>A4GGA2</accession>
<gene>
    <name evidence="2" type="primary">psbD</name>
</gene>
<evidence type="ECO:0000250" key="1">
    <source>
        <dbReference type="UniProtKB" id="P56761"/>
    </source>
</evidence>
<evidence type="ECO:0000255" key="2">
    <source>
        <dbReference type="HAMAP-Rule" id="MF_01383"/>
    </source>
</evidence>
<reference key="1">
    <citation type="journal article" date="2007" name="BMC Genomics">
        <title>Rapid evolutionary change of common bean (Phaseolus vulgaris L) plastome, and the genomic diversification of legume chloroplasts.</title>
        <authorList>
            <person name="Guo X."/>
            <person name="Castillo-Ramirez S."/>
            <person name="Gonzalez V."/>
            <person name="Bustos P."/>
            <person name="Fernandez-Vazquez J.L."/>
            <person name="Santamaria R.I."/>
            <person name="Arellano J."/>
            <person name="Cevallos M.A."/>
            <person name="Davila G."/>
        </authorList>
    </citation>
    <scope>NUCLEOTIDE SEQUENCE [LARGE SCALE GENOMIC DNA]</scope>
    <source>
        <strain>cv. Negro Jamapa</strain>
    </source>
</reference>
<reference key="2">
    <citation type="submission" date="2007-10" db="EMBL/GenBank/DDBJ databases">
        <title>Complete nucleotide sequence of the plastid genome of the common bean, Phaseolus vulgaris.</title>
        <authorList>
            <person name="Moore M.J."/>
            <person name="Triplett E.W."/>
            <person name="Broughton W.J."/>
            <person name="Soltis P.S."/>
            <person name="Soltis D.E."/>
        </authorList>
    </citation>
    <scope>NUCLEOTIDE SEQUENCE [LARGE SCALE GENOMIC DNA]</scope>
</reference>
<feature type="initiator methionine" description="Removed" evidence="1">
    <location>
        <position position="1"/>
    </location>
</feature>
<feature type="chain" id="PRO_0000359685" description="Photosystem II D2 protein">
    <location>
        <begin position="2"/>
        <end position="353"/>
    </location>
</feature>
<feature type="transmembrane region" description="Helical" evidence="2">
    <location>
        <begin position="41"/>
        <end position="61"/>
    </location>
</feature>
<feature type="transmembrane region" description="Helical" evidence="2">
    <location>
        <begin position="125"/>
        <end position="141"/>
    </location>
</feature>
<feature type="transmembrane region" description="Helical" evidence="2">
    <location>
        <begin position="153"/>
        <end position="166"/>
    </location>
</feature>
<feature type="transmembrane region" description="Helical" evidence="2">
    <location>
        <begin position="208"/>
        <end position="228"/>
    </location>
</feature>
<feature type="transmembrane region" description="Helical" evidence="2">
    <location>
        <begin position="279"/>
        <end position="295"/>
    </location>
</feature>
<feature type="binding site" description="axial binding residue" evidence="2">
    <location>
        <position position="118"/>
    </location>
    <ligand>
        <name>chlorophyll a</name>
        <dbReference type="ChEBI" id="CHEBI:58416"/>
        <label>ChlzD2</label>
    </ligand>
    <ligandPart>
        <name>Mg</name>
        <dbReference type="ChEBI" id="CHEBI:25107"/>
    </ligandPart>
</feature>
<feature type="binding site" evidence="2">
    <location>
        <position position="130"/>
    </location>
    <ligand>
        <name>pheophytin a</name>
        <dbReference type="ChEBI" id="CHEBI:136840"/>
        <label>D2</label>
    </ligand>
</feature>
<feature type="binding site" evidence="2">
    <location>
        <position position="143"/>
    </location>
    <ligand>
        <name>pheophytin a</name>
        <dbReference type="ChEBI" id="CHEBI:136840"/>
        <label>D2</label>
    </ligand>
</feature>
<feature type="binding site" description="axial binding residue" evidence="2">
    <location>
        <position position="198"/>
    </location>
    <ligand>
        <name>chlorophyll a</name>
        <dbReference type="ChEBI" id="CHEBI:58416"/>
        <label>PD2</label>
    </ligand>
    <ligandPart>
        <name>Mg</name>
        <dbReference type="ChEBI" id="CHEBI:25107"/>
    </ligandPart>
</feature>
<feature type="binding site" evidence="2">
    <location>
        <position position="215"/>
    </location>
    <ligand>
        <name>a plastoquinone</name>
        <dbReference type="ChEBI" id="CHEBI:17757"/>
        <label>Q(A)</label>
    </ligand>
</feature>
<feature type="binding site" evidence="2">
    <location>
        <position position="215"/>
    </location>
    <ligand>
        <name>Fe cation</name>
        <dbReference type="ChEBI" id="CHEBI:24875"/>
        <note>ligand shared with heterodimeric partner</note>
    </ligand>
</feature>
<feature type="binding site" evidence="2">
    <location>
        <position position="262"/>
    </location>
    <ligand>
        <name>a plastoquinone</name>
        <dbReference type="ChEBI" id="CHEBI:17757"/>
        <label>Q(A)</label>
    </ligand>
</feature>
<feature type="binding site" evidence="2">
    <location>
        <position position="269"/>
    </location>
    <ligand>
        <name>Fe cation</name>
        <dbReference type="ChEBI" id="CHEBI:24875"/>
        <note>ligand shared with heterodimeric partner</note>
    </ligand>
</feature>
<feature type="modified residue" description="N-acetylthreonine" evidence="1">
    <location>
        <position position="2"/>
    </location>
</feature>
<feature type="modified residue" description="Phosphothreonine" evidence="1">
    <location>
        <position position="2"/>
    </location>
</feature>
<proteinExistence type="inferred from homology"/>
<keyword id="KW-0007">Acetylation</keyword>
<keyword id="KW-0148">Chlorophyll</keyword>
<keyword id="KW-0150">Chloroplast</keyword>
<keyword id="KW-0157">Chromophore</keyword>
<keyword id="KW-0249">Electron transport</keyword>
<keyword id="KW-0408">Iron</keyword>
<keyword id="KW-0460">Magnesium</keyword>
<keyword id="KW-0472">Membrane</keyword>
<keyword id="KW-0479">Metal-binding</keyword>
<keyword id="KW-0560">Oxidoreductase</keyword>
<keyword id="KW-0597">Phosphoprotein</keyword>
<keyword id="KW-0602">Photosynthesis</keyword>
<keyword id="KW-0604">Photosystem II</keyword>
<keyword id="KW-0934">Plastid</keyword>
<keyword id="KW-0793">Thylakoid</keyword>
<keyword id="KW-0812">Transmembrane</keyword>
<keyword id="KW-1133">Transmembrane helix</keyword>
<keyword id="KW-0813">Transport</keyword>